<keyword id="KW-0067">ATP-binding</keyword>
<keyword id="KW-0414">Isoprene biosynthesis</keyword>
<keyword id="KW-0418">Kinase</keyword>
<keyword id="KW-0547">Nucleotide-binding</keyword>
<keyword id="KW-1185">Reference proteome</keyword>
<keyword id="KW-0808">Transferase</keyword>
<proteinExistence type="inferred from homology"/>
<protein>
    <recommendedName>
        <fullName evidence="1">4-diphosphocytidyl-2-C-methyl-D-erythritol kinase</fullName>
        <shortName evidence="1">CMK</shortName>
        <ecNumber evidence="1">2.7.1.148</ecNumber>
    </recommendedName>
    <alternativeName>
        <fullName evidence="1">4-(cytidine-5'-diphospho)-2-C-methyl-D-erythritol kinase</fullName>
    </alternativeName>
</protein>
<organism>
    <name type="scientific">Nitrosospira multiformis (strain ATCC 25196 / NCIMB 11849 / C 71)</name>
    <dbReference type="NCBI Taxonomy" id="323848"/>
    <lineage>
        <taxon>Bacteria</taxon>
        <taxon>Pseudomonadati</taxon>
        <taxon>Pseudomonadota</taxon>
        <taxon>Betaproteobacteria</taxon>
        <taxon>Nitrosomonadales</taxon>
        <taxon>Nitrosomonadaceae</taxon>
        <taxon>Nitrosospira</taxon>
    </lineage>
</organism>
<feature type="chain" id="PRO_0000235108" description="4-diphosphocytidyl-2-C-methyl-D-erythritol kinase">
    <location>
        <begin position="1"/>
        <end position="294"/>
    </location>
</feature>
<feature type="active site" evidence="1">
    <location>
        <position position="23"/>
    </location>
</feature>
<feature type="active site" evidence="1">
    <location>
        <position position="148"/>
    </location>
</feature>
<feature type="binding site" evidence="1">
    <location>
        <begin position="106"/>
        <end position="116"/>
    </location>
    <ligand>
        <name>ATP</name>
        <dbReference type="ChEBI" id="CHEBI:30616"/>
    </ligand>
</feature>
<gene>
    <name evidence="1" type="primary">ispE</name>
    <name type="ordered locus">Nmul_A0588</name>
</gene>
<dbReference type="EC" id="2.7.1.148" evidence="1"/>
<dbReference type="EMBL" id="CP000103">
    <property type="protein sequence ID" value="ABB73896.1"/>
    <property type="molecule type" value="Genomic_DNA"/>
</dbReference>
<dbReference type="RefSeq" id="WP_011379950.1">
    <property type="nucleotide sequence ID" value="NC_007614.1"/>
</dbReference>
<dbReference type="SMR" id="Q2YBH5"/>
<dbReference type="STRING" id="323848.Nmul_A0588"/>
<dbReference type="KEGG" id="nmu:Nmul_A0588"/>
<dbReference type="eggNOG" id="COG1947">
    <property type="taxonomic scope" value="Bacteria"/>
</dbReference>
<dbReference type="HOGENOM" id="CLU_053057_3_0_4"/>
<dbReference type="OrthoDB" id="9809438at2"/>
<dbReference type="UniPathway" id="UPA00056">
    <property type="reaction ID" value="UER00094"/>
</dbReference>
<dbReference type="Proteomes" id="UP000002718">
    <property type="component" value="Chromosome"/>
</dbReference>
<dbReference type="GO" id="GO:0050515">
    <property type="term" value="F:4-(cytidine 5'-diphospho)-2-C-methyl-D-erythritol kinase activity"/>
    <property type="evidence" value="ECO:0007669"/>
    <property type="project" value="UniProtKB-UniRule"/>
</dbReference>
<dbReference type="GO" id="GO:0005524">
    <property type="term" value="F:ATP binding"/>
    <property type="evidence" value="ECO:0007669"/>
    <property type="project" value="UniProtKB-UniRule"/>
</dbReference>
<dbReference type="GO" id="GO:0019288">
    <property type="term" value="P:isopentenyl diphosphate biosynthetic process, methylerythritol 4-phosphate pathway"/>
    <property type="evidence" value="ECO:0007669"/>
    <property type="project" value="UniProtKB-UniRule"/>
</dbReference>
<dbReference type="GO" id="GO:0016114">
    <property type="term" value="P:terpenoid biosynthetic process"/>
    <property type="evidence" value="ECO:0007669"/>
    <property type="project" value="InterPro"/>
</dbReference>
<dbReference type="Gene3D" id="3.30.230.10">
    <property type="match status" value="1"/>
</dbReference>
<dbReference type="Gene3D" id="3.30.70.890">
    <property type="entry name" value="GHMP kinase, C-terminal domain"/>
    <property type="match status" value="1"/>
</dbReference>
<dbReference type="HAMAP" id="MF_00061">
    <property type="entry name" value="IspE"/>
    <property type="match status" value="1"/>
</dbReference>
<dbReference type="InterPro" id="IPR013750">
    <property type="entry name" value="GHMP_kinase_C_dom"/>
</dbReference>
<dbReference type="InterPro" id="IPR036554">
    <property type="entry name" value="GHMP_kinase_C_sf"/>
</dbReference>
<dbReference type="InterPro" id="IPR006204">
    <property type="entry name" value="GHMP_kinase_N_dom"/>
</dbReference>
<dbReference type="InterPro" id="IPR004424">
    <property type="entry name" value="IspE"/>
</dbReference>
<dbReference type="InterPro" id="IPR020568">
    <property type="entry name" value="Ribosomal_Su5_D2-typ_SF"/>
</dbReference>
<dbReference type="InterPro" id="IPR014721">
    <property type="entry name" value="Ribsml_uS5_D2-typ_fold_subgr"/>
</dbReference>
<dbReference type="NCBIfam" id="TIGR00154">
    <property type="entry name" value="ispE"/>
    <property type="match status" value="1"/>
</dbReference>
<dbReference type="PANTHER" id="PTHR43527">
    <property type="entry name" value="4-DIPHOSPHOCYTIDYL-2-C-METHYL-D-ERYTHRITOL KINASE, CHLOROPLASTIC"/>
    <property type="match status" value="1"/>
</dbReference>
<dbReference type="PANTHER" id="PTHR43527:SF2">
    <property type="entry name" value="4-DIPHOSPHOCYTIDYL-2-C-METHYL-D-ERYTHRITOL KINASE, CHLOROPLASTIC"/>
    <property type="match status" value="1"/>
</dbReference>
<dbReference type="Pfam" id="PF08544">
    <property type="entry name" value="GHMP_kinases_C"/>
    <property type="match status" value="1"/>
</dbReference>
<dbReference type="Pfam" id="PF00288">
    <property type="entry name" value="GHMP_kinases_N"/>
    <property type="match status" value="1"/>
</dbReference>
<dbReference type="PIRSF" id="PIRSF010376">
    <property type="entry name" value="IspE"/>
    <property type="match status" value="1"/>
</dbReference>
<dbReference type="SUPFAM" id="SSF55060">
    <property type="entry name" value="GHMP Kinase, C-terminal domain"/>
    <property type="match status" value="1"/>
</dbReference>
<dbReference type="SUPFAM" id="SSF54211">
    <property type="entry name" value="Ribosomal protein S5 domain 2-like"/>
    <property type="match status" value="1"/>
</dbReference>
<name>ISPE_NITMU</name>
<accession>Q2YBH5</accession>
<evidence type="ECO:0000255" key="1">
    <source>
        <dbReference type="HAMAP-Rule" id="MF_00061"/>
    </source>
</evidence>
<comment type="function">
    <text evidence="1">Catalyzes the phosphorylation of the position 2 hydroxy group of 4-diphosphocytidyl-2C-methyl-D-erythritol.</text>
</comment>
<comment type="catalytic activity">
    <reaction evidence="1">
        <text>4-CDP-2-C-methyl-D-erythritol + ATP = 4-CDP-2-C-methyl-D-erythritol 2-phosphate + ADP + H(+)</text>
        <dbReference type="Rhea" id="RHEA:18437"/>
        <dbReference type="ChEBI" id="CHEBI:15378"/>
        <dbReference type="ChEBI" id="CHEBI:30616"/>
        <dbReference type="ChEBI" id="CHEBI:57823"/>
        <dbReference type="ChEBI" id="CHEBI:57919"/>
        <dbReference type="ChEBI" id="CHEBI:456216"/>
        <dbReference type="EC" id="2.7.1.148"/>
    </reaction>
</comment>
<comment type="pathway">
    <text evidence="1">Isoprenoid biosynthesis; isopentenyl diphosphate biosynthesis via DXP pathway; isopentenyl diphosphate from 1-deoxy-D-xylulose 5-phosphate: step 3/6.</text>
</comment>
<comment type="similarity">
    <text evidence="1">Belongs to the GHMP kinase family. IspE subfamily.</text>
</comment>
<sequence length="294" mass="32008">MNGILSTTEVDSQAELSCPAPAKLNLFLHVVGRREDGYHLLQTVFRLVDFADQLHFGLRADGVIKLHTPTPGVPEEQDLCVRAAKLLQRESGTPWGANIFLEKRIPMGGGLGGGSSDAATTLLALNRLWKLGWRRNQLLKLAPELGADVPVFVFSENAFAEGIGEKLLPIALPPAWYLILTPPVHVSTAKVFSSKELTRNTIPIKIPPFSTEQGHNDLEPVVCASYPEVARHLEWLRQLEGARMAAMTGSGACVFAEFATESGARSALGKIPYGMKGFVAQGLDRHPLHDFAEQ</sequence>
<reference key="1">
    <citation type="submission" date="2005-08" db="EMBL/GenBank/DDBJ databases">
        <title>Complete sequence of chromosome 1 of Nitrosospira multiformis ATCC 25196.</title>
        <authorList>
            <person name="Copeland A."/>
            <person name="Lucas S."/>
            <person name="Lapidus A."/>
            <person name="Barry K."/>
            <person name="Detter J.C."/>
            <person name="Glavina T."/>
            <person name="Hammon N."/>
            <person name="Israni S."/>
            <person name="Pitluck S."/>
            <person name="Chain P."/>
            <person name="Malfatti S."/>
            <person name="Shin M."/>
            <person name="Vergez L."/>
            <person name="Schmutz J."/>
            <person name="Larimer F."/>
            <person name="Land M."/>
            <person name="Hauser L."/>
            <person name="Kyrpides N."/>
            <person name="Lykidis A."/>
            <person name="Richardson P."/>
        </authorList>
    </citation>
    <scope>NUCLEOTIDE SEQUENCE [LARGE SCALE GENOMIC DNA]</scope>
    <source>
        <strain>ATCC 25196 / NCIMB 11849 / C 71</strain>
    </source>
</reference>